<evidence type="ECO:0000255" key="1">
    <source>
        <dbReference type="HAMAP-Rule" id="MF_00739"/>
    </source>
</evidence>
<proteinExistence type="inferred from homology"/>
<keyword id="KW-0963">Cytoplasm</keyword>
<keyword id="KW-0378">Hydrolase</keyword>
<keyword id="KW-1185">Reference proteome</keyword>
<reference key="1">
    <citation type="journal article" date="2001" name="Proc. Natl. Acad. Sci. U.S.A.">
        <title>Genome sequence of an industrial microorganism Streptomyces avermitilis: deducing the ability of producing secondary metabolites.</title>
        <authorList>
            <person name="Omura S."/>
            <person name="Ikeda H."/>
            <person name="Ishikawa J."/>
            <person name="Hanamoto A."/>
            <person name="Takahashi C."/>
            <person name="Shinose M."/>
            <person name="Takahashi Y."/>
            <person name="Horikawa H."/>
            <person name="Nakazawa H."/>
            <person name="Osonoe T."/>
            <person name="Kikuchi H."/>
            <person name="Shiba T."/>
            <person name="Sakaki Y."/>
            <person name="Hattori M."/>
        </authorList>
    </citation>
    <scope>NUCLEOTIDE SEQUENCE [LARGE SCALE GENOMIC DNA]</scope>
    <source>
        <strain>ATCC 31267 / DSM 46492 / JCM 5070 / NBRC 14893 / NCIMB 12804 / NRRL 8165 / MA-4680</strain>
    </source>
</reference>
<reference key="2">
    <citation type="journal article" date="2003" name="Nat. Biotechnol.">
        <title>Complete genome sequence and comparative analysis of the industrial microorganism Streptomyces avermitilis.</title>
        <authorList>
            <person name="Ikeda H."/>
            <person name="Ishikawa J."/>
            <person name="Hanamoto A."/>
            <person name="Shinose M."/>
            <person name="Kikuchi H."/>
            <person name="Shiba T."/>
            <person name="Sakaki Y."/>
            <person name="Hattori M."/>
            <person name="Omura S."/>
        </authorList>
    </citation>
    <scope>NUCLEOTIDE SEQUENCE [LARGE SCALE GENOMIC DNA]</scope>
    <source>
        <strain>ATCC 31267 / DSM 46492 / JCM 5070 / NBRC 14893 / NCIMB 12804 / NRRL 8165 / MA-4680</strain>
    </source>
</reference>
<comment type="catalytic activity">
    <reaction evidence="1">
        <text>urea + 2 H2O + H(+) = hydrogencarbonate + 2 NH4(+)</text>
        <dbReference type="Rhea" id="RHEA:20557"/>
        <dbReference type="ChEBI" id="CHEBI:15377"/>
        <dbReference type="ChEBI" id="CHEBI:15378"/>
        <dbReference type="ChEBI" id="CHEBI:16199"/>
        <dbReference type="ChEBI" id="CHEBI:17544"/>
        <dbReference type="ChEBI" id="CHEBI:28938"/>
        <dbReference type="EC" id="3.5.1.5"/>
    </reaction>
</comment>
<comment type="pathway">
    <text evidence="1">Nitrogen metabolism; urea degradation; CO(2) and NH(3) from urea (urease route): step 1/1.</text>
</comment>
<comment type="subunit">
    <text evidence="1">Heterotrimer of UreA (gamma), UreB (beta) and UreC (alpha) subunits. Three heterotrimers associate to form the active enzyme.</text>
</comment>
<comment type="subcellular location">
    <subcellularLocation>
        <location evidence="1">Cytoplasm</location>
    </subcellularLocation>
</comment>
<comment type="similarity">
    <text evidence="1">Belongs to the urease gamma subunit family.</text>
</comment>
<protein>
    <recommendedName>
        <fullName evidence="1">Urease subunit gamma</fullName>
        <ecNumber evidence="1">3.5.1.5</ecNumber>
    </recommendedName>
    <alternativeName>
        <fullName evidence="1">Urea amidohydrolase subunit gamma</fullName>
    </alternativeName>
</protein>
<name>URE3_STRAW</name>
<gene>
    <name evidence="1" type="primary">ureA</name>
    <name type="ordered locus">SAV_7104</name>
</gene>
<organism>
    <name type="scientific">Streptomyces avermitilis (strain ATCC 31267 / DSM 46492 / JCM 5070 / NBRC 14893 / NCIMB 12804 / NRRL 8165 / MA-4680)</name>
    <dbReference type="NCBI Taxonomy" id="227882"/>
    <lineage>
        <taxon>Bacteria</taxon>
        <taxon>Bacillati</taxon>
        <taxon>Actinomycetota</taxon>
        <taxon>Actinomycetes</taxon>
        <taxon>Kitasatosporales</taxon>
        <taxon>Streptomycetaceae</taxon>
        <taxon>Streptomyces</taxon>
    </lineage>
</organism>
<sequence>MQLTPHEQERLLIHVAADVAEKRRARGLKLNHPEAVALITSHILEGARDGRTVAELMSSGRKLLTRDDVMEGIPEMIHDVQVEATFPDGTKLVTVHDPIV</sequence>
<accession>Q826S1</accession>
<dbReference type="EC" id="3.5.1.5" evidence="1"/>
<dbReference type="EMBL" id="BA000030">
    <property type="protein sequence ID" value="BAC74815.1"/>
    <property type="molecule type" value="Genomic_DNA"/>
</dbReference>
<dbReference type="RefSeq" id="WP_010988499.1">
    <property type="nucleotide sequence ID" value="NZ_JZJK01000085.1"/>
</dbReference>
<dbReference type="SMR" id="Q826S1"/>
<dbReference type="KEGG" id="sma:SAVERM_7104"/>
<dbReference type="eggNOG" id="COG0831">
    <property type="taxonomic scope" value="Bacteria"/>
</dbReference>
<dbReference type="HOGENOM" id="CLU_145825_1_0_11"/>
<dbReference type="OrthoDB" id="9797217at2"/>
<dbReference type="UniPathway" id="UPA00258">
    <property type="reaction ID" value="UER00370"/>
</dbReference>
<dbReference type="Proteomes" id="UP000000428">
    <property type="component" value="Chromosome"/>
</dbReference>
<dbReference type="GO" id="GO:0005737">
    <property type="term" value="C:cytoplasm"/>
    <property type="evidence" value="ECO:0007669"/>
    <property type="project" value="UniProtKB-SubCell"/>
</dbReference>
<dbReference type="GO" id="GO:0016151">
    <property type="term" value="F:nickel cation binding"/>
    <property type="evidence" value="ECO:0007669"/>
    <property type="project" value="InterPro"/>
</dbReference>
<dbReference type="GO" id="GO:0009039">
    <property type="term" value="F:urease activity"/>
    <property type="evidence" value="ECO:0007669"/>
    <property type="project" value="UniProtKB-UniRule"/>
</dbReference>
<dbReference type="GO" id="GO:0043419">
    <property type="term" value="P:urea catabolic process"/>
    <property type="evidence" value="ECO:0007669"/>
    <property type="project" value="UniProtKB-UniRule"/>
</dbReference>
<dbReference type="CDD" id="cd00390">
    <property type="entry name" value="Urease_gamma"/>
    <property type="match status" value="1"/>
</dbReference>
<dbReference type="Gene3D" id="3.30.280.10">
    <property type="entry name" value="Urease, gamma-like subunit"/>
    <property type="match status" value="1"/>
</dbReference>
<dbReference type="HAMAP" id="MF_00739">
    <property type="entry name" value="Urease_gamma"/>
    <property type="match status" value="1"/>
</dbReference>
<dbReference type="InterPro" id="IPR012010">
    <property type="entry name" value="Urease_gamma"/>
</dbReference>
<dbReference type="InterPro" id="IPR002026">
    <property type="entry name" value="Urease_gamma/gamma-beta_su"/>
</dbReference>
<dbReference type="InterPro" id="IPR036463">
    <property type="entry name" value="Urease_gamma_sf"/>
</dbReference>
<dbReference type="InterPro" id="IPR050069">
    <property type="entry name" value="Urease_subunit"/>
</dbReference>
<dbReference type="NCBIfam" id="NF009712">
    <property type="entry name" value="PRK13241.1"/>
    <property type="match status" value="1"/>
</dbReference>
<dbReference type="NCBIfam" id="TIGR00193">
    <property type="entry name" value="urease_gam"/>
    <property type="match status" value="1"/>
</dbReference>
<dbReference type="PANTHER" id="PTHR33569">
    <property type="entry name" value="UREASE"/>
    <property type="match status" value="1"/>
</dbReference>
<dbReference type="PANTHER" id="PTHR33569:SF1">
    <property type="entry name" value="UREASE"/>
    <property type="match status" value="1"/>
</dbReference>
<dbReference type="Pfam" id="PF00547">
    <property type="entry name" value="Urease_gamma"/>
    <property type="match status" value="1"/>
</dbReference>
<dbReference type="PIRSF" id="PIRSF001223">
    <property type="entry name" value="Urease_gamma"/>
    <property type="match status" value="1"/>
</dbReference>
<dbReference type="SUPFAM" id="SSF54111">
    <property type="entry name" value="Urease, gamma-subunit"/>
    <property type="match status" value="1"/>
</dbReference>
<feature type="chain" id="PRO_0000098048" description="Urease subunit gamma">
    <location>
        <begin position="1"/>
        <end position="100"/>
    </location>
</feature>